<gene>
    <name evidence="1" type="primary">rimM</name>
    <name type="ordered locus">Glov_2452</name>
</gene>
<reference key="1">
    <citation type="submission" date="2008-05" db="EMBL/GenBank/DDBJ databases">
        <title>Complete sequence of chromosome of Geobacter lovleyi SZ.</title>
        <authorList>
            <consortium name="US DOE Joint Genome Institute"/>
            <person name="Lucas S."/>
            <person name="Copeland A."/>
            <person name="Lapidus A."/>
            <person name="Glavina del Rio T."/>
            <person name="Dalin E."/>
            <person name="Tice H."/>
            <person name="Bruce D."/>
            <person name="Goodwin L."/>
            <person name="Pitluck S."/>
            <person name="Chertkov O."/>
            <person name="Meincke L."/>
            <person name="Brettin T."/>
            <person name="Detter J.C."/>
            <person name="Han C."/>
            <person name="Tapia R."/>
            <person name="Kuske C.R."/>
            <person name="Schmutz J."/>
            <person name="Larimer F."/>
            <person name="Land M."/>
            <person name="Hauser L."/>
            <person name="Kyrpides N."/>
            <person name="Mikhailova N."/>
            <person name="Sung Y."/>
            <person name="Fletcher K.E."/>
            <person name="Ritalahti K.M."/>
            <person name="Loeffler F.E."/>
            <person name="Richardson P."/>
        </authorList>
    </citation>
    <scope>NUCLEOTIDE SEQUENCE [LARGE SCALE GENOMIC DNA]</scope>
    <source>
        <strain>ATCC BAA-1151 / DSM 17278 / SZ</strain>
    </source>
</reference>
<evidence type="ECO:0000255" key="1">
    <source>
        <dbReference type="HAMAP-Rule" id="MF_00014"/>
    </source>
</evidence>
<dbReference type="EMBL" id="CP001089">
    <property type="protein sequence ID" value="ACD96166.1"/>
    <property type="molecule type" value="Genomic_DNA"/>
</dbReference>
<dbReference type="RefSeq" id="WP_012470499.1">
    <property type="nucleotide sequence ID" value="NC_010814.1"/>
</dbReference>
<dbReference type="SMR" id="B3E5S5"/>
<dbReference type="STRING" id="398767.Glov_2452"/>
<dbReference type="KEGG" id="glo:Glov_2452"/>
<dbReference type="eggNOG" id="COG0806">
    <property type="taxonomic scope" value="Bacteria"/>
</dbReference>
<dbReference type="HOGENOM" id="CLU_077636_1_0_7"/>
<dbReference type="OrthoDB" id="9783509at2"/>
<dbReference type="Proteomes" id="UP000002420">
    <property type="component" value="Chromosome"/>
</dbReference>
<dbReference type="GO" id="GO:0005737">
    <property type="term" value="C:cytoplasm"/>
    <property type="evidence" value="ECO:0007669"/>
    <property type="project" value="UniProtKB-SubCell"/>
</dbReference>
<dbReference type="GO" id="GO:0005840">
    <property type="term" value="C:ribosome"/>
    <property type="evidence" value="ECO:0007669"/>
    <property type="project" value="InterPro"/>
</dbReference>
<dbReference type="GO" id="GO:0043022">
    <property type="term" value="F:ribosome binding"/>
    <property type="evidence" value="ECO:0007669"/>
    <property type="project" value="InterPro"/>
</dbReference>
<dbReference type="GO" id="GO:0042274">
    <property type="term" value="P:ribosomal small subunit biogenesis"/>
    <property type="evidence" value="ECO:0007669"/>
    <property type="project" value="UniProtKB-UniRule"/>
</dbReference>
<dbReference type="GO" id="GO:0006364">
    <property type="term" value="P:rRNA processing"/>
    <property type="evidence" value="ECO:0007669"/>
    <property type="project" value="UniProtKB-UniRule"/>
</dbReference>
<dbReference type="Gene3D" id="2.30.30.240">
    <property type="entry name" value="PRC-barrel domain"/>
    <property type="match status" value="1"/>
</dbReference>
<dbReference type="Gene3D" id="2.40.30.60">
    <property type="entry name" value="RimM"/>
    <property type="match status" value="1"/>
</dbReference>
<dbReference type="HAMAP" id="MF_00014">
    <property type="entry name" value="Ribosome_mat_RimM"/>
    <property type="match status" value="1"/>
</dbReference>
<dbReference type="InterPro" id="IPR011033">
    <property type="entry name" value="PRC_barrel-like_sf"/>
</dbReference>
<dbReference type="InterPro" id="IPR056792">
    <property type="entry name" value="PRC_RimM"/>
</dbReference>
<dbReference type="InterPro" id="IPR011961">
    <property type="entry name" value="RimM"/>
</dbReference>
<dbReference type="InterPro" id="IPR002676">
    <property type="entry name" value="RimM_N"/>
</dbReference>
<dbReference type="InterPro" id="IPR036976">
    <property type="entry name" value="RimM_N_sf"/>
</dbReference>
<dbReference type="InterPro" id="IPR009000">
    <property type="entry name" value="Transl_B-barrel_sf"/>
</dbReference>
<dbReference type="NCBIfam" id="TIGR02273">
    <property type="entry name" value="16S_RimM"/>
    <property type="match status" value="1"/>
</dbReference>
<dbReference type="PANTHER" id="PTHR33692">
    <property type="entry name" value="RIBOSOME MATURATION FACTOR RIMM"/>
    <property type="match status" value="1"/>
</dbReference>
<dbReference type="PANTHER" id="PTHR33692:SF1">
    <property type="entry name" value="RIBOSOME MATURATION FACTOR RIMM"/>
    <property type="match status" value="1"/>
</dbReference>
<dbReference type="Pfam" id="PF24986">
    <property type="entry name" value="PRC_RimM"/>
    <property type="match status" value="1"/>
</dbReference>
<dbReference type="Pfam" id="PF01782">
    <property type="entry name" value="RimM"/>
    <property type="match status" value="1"/>
</dbReference>
<dbReference type="SUPFAM" id="SSF50346">
    <property type="entry name" value="PRC-barrel domain"/>
    <property type="match status" value="1"/>
</dbReference>
<dbReference type="SUPFAM" id="SSF50447">
    <property type="entry name" value="Translation proteins"/>
    <property type="match status" value="1"/>
</dbReference>
<accession>B3E5S5</accession>
<protein>
    <recommendedName>
        <fullName evidence="1">Ribosome maturation factor RimM</fullName>
    </recommendedName>
</protein>
<sequence>MDGSSDNLIAVGRISGTHGIRGQLRLHSYSGNLESLQAAKNVLIRFPAGGTRQIQLKKAAYHSGKFLLTLEGFDTIEKAQELAGAELLLQREQLPPPDADEYYWHDLLGLSVVTNEGQALGIIKDILETGANDVYLVRDDATKREYLIPAIASVISSVNIHTGTMTITPLEGLLDL</sequence>
<keyword id="KW-0143">Chaperone</keyword>
<keyword id="KW-0963">Cytoplasm</keyword>
<keyword id="KW-1185">Reference proteome</keyword>
<keyword id="KW-0690">Ribosome biogenesis</keyword>
<keyword id="KW-0698">rRNA processing</keyword>
<name>RIMM_TRIL1</name>
<comment type="function">
    <text evidence="1">An accessory protein needed during the final step in the assembly of 30S ribosomal subunit, possibly for assembly of the head region. Essential for efficient processing of 16S rRNA. May be needed both before and after RbfA during the maturation of 16S rRNA. It has affinity for free ribosomal 30S subunits but not for 70S ribosomes.</text>
</comment>
<comment type="subunit">
    <text evidence="1">Binds ribosomal protein uS19.</text>
</comment>
<comment type="subcellular location">
    <subcellularLocation>
        <location evidence="1">Cytoplasm</location>
    </subcellularLocation>
</comment>
<comment type="domain">
    <text evidence="1">The PRC barrel domain binds ribosomal protein uS19.</text>
</comment>
<comment type="similarity">
    <text evidence="1">Belongs to the RimM family.</text>
</comment>
<feature type="chain" id="PRO_0000351760" description="Ribosome maturation factor RimM">
    <location>
        <begin position="1"/>
        <end position="176"/>
    </location>
</feature>
<feature type="domain" description="PRC barrel" evidence="1">
    <location>
        <begin position="99"/>
        <end position="173"/>
    </location>
</feature>
<proteinExistence type="inferred from homology"/>
<organism>
    <name type="scientific">Trichlorobacter lovleyi (strain ATCC BAA-1151 / DSM 17278 / SZ)</name>
    <name type="common">Geobacter lovleyi</name>
    <dbReference type="NCBI Taxonomy" id="398767"/>
    <lineage>
        <taxon>Bacteria</taxon>
        <taxon>Pseudomonadati</taxon>
        <taxon>Thermodesulfobacteriota</taxon>
        <taxon>Desulfuromonadia</taxon>
        <taxon>Geobacterales</taxon>
        <taxon>Geobacteraceae</taxon>
        <taxon>Trichlorobacter</taxon>
    </lineage>
</organism>